<feature type="chain" id="PRO_0000158265" description="Putative RNase MJ1548">
    <location>
        <begin position="1"/>
        <end position="87"/>
    </location>
</feature>
<feature type="short sequence motif" description="RX(4)HXY motif" evidence="1">
    <location>
        <begin position="65"/>
        <end position="72"/>
    </location>
</feature>
<feature type="active site" evidence="1">
    <location>
        <position position="65"/>
    </location>
</feature>
<feature type="active site" evidence="1">
    <location>
        <position position="70"/>
    </location>
</feature>
<feature type="modified residue" description="O-di-AMP-tyrosine" evidence="1">
    <location>
        <position position="72"/>
    </location>
</feature>
<sequence length="87" mass="10328">MRLQKGLYYISLQVCVDITMDVVAMLVKDIGLNVEDDYTNIKKLLKHDVITKDEATLLKQYNRLRNAIVHKYDKIKLRSCKRRFKKN</sequence>
<keyword id="KW-0378">Hydrolase</keyword>
<keyword id="KW-0540">Nuclease</keyword>
<keyword id="KW-0547">Nucleotide-binding</keyword>
<keyword id="KW-0597">Phosphoprotein</keyword>
<keyword id="KW-1185">Reference proteome</keyword>
<keyword id="KW-1277">Toxin-antitoxin system</keyword>
<reference key="1">
    <citation type="journal article" date="1996" name="Science">
        <title>Complete genome sequence of the methanogenic archaeon, Methanococcus jannaschii.</title>
        <authorList>
            <person name="Bult C.J."/>
            <person name="White O."/>
            <person name="Olsen G.J."/>
            <person name="Zhou L."/>
            <person name="Fleischmann R.D."/>
            <person name="Sutton G.G."/>
            <person name="Blake J.A."/>
            <person name="FitzGerald L.M."/>
            <person name="Clayton R.A."/>
            <person name="Gocayne J.D."/>
            <person name="Kerlavage A.R."/>
            <person name="Dougherty B.A."/>
            <person name="Tomb J.-F."/>
            <person name="Adams M.D."/>
            <person name="Reich C.I."/>
            <person name="Overbeek R."/>
            <person name="Kirkness E.F."/>
            <person name="Weinstock K.G."/>
            <person name="Merrick J.M."/>
            <person name="Glodek A."/>
            <person name="Scott J.L."/>
            <person name="Geoghagen N.S.M."/>
            <person name="Weidman J.F."/>
            <person name="Fuhrmann J.L."/>
            <person name="Nguyen D."/>
            <person name="Utterback T.R."/>
            <person name="Kelley J.M."/>
            <person name="Peterson J.D."/>
            <person name="Sadow P.W."/>
            <person name="Hanna M.C."/>
            <person name="Cotton M.D."/>
            <person name="Roberts K.M."/>
            <person name="Hurst M.A."/>
            <person name="Kaine B.P."/>
            <person name="Borodovsky M."/>
            <person name="Klenk H.-P."/>
            <person name="Fraser C.M."/>
            <person name="Smith H.O."/>
            <person name="Woese C.R."/>
            <person name="Venter J.C."/>
        </authorList>
    </citation>
    <scope>NUCLEOTIDE SEQUENCE [LARGE SCALE GENOMIC DNA]</scope>
    <source>
        <strain>ATCC 43067 / DSM 2661 / JAL-1 / JCM 10045 / NBRC 100440</strain>
    </source>
</reference>
<accession>Q58943</accession>
<proteinExistence type="inferred from homology"/>
<evidence type="ECO:0000250" key="1">
    <source>
        <dbReference type="UniProtKB" id="A0A0B0QJR1"/>
    </source>
</evidence>
<evidence type="ECO:0000250" key="2">
    <source>
        <dbReference type="UniProtKB" id="Q8ECH6"/>
    </source>
</evidence>
<evidence type="ECO:0000305" key="3"/>
<protein>
    <recommendedName>
        <fullName>Putative RNase MJ1548</fullName>
        <ecNumber evidence="2">3.1.-.-</ecNumber>
    </recommendedName>
    <alternativeName>
        <fullName>Putative toxin MJ1548</fullName>
    </alternativeName>
</protein>
<name>Y1548_METJA</name>
<comment type="function">
    <text evidence="2">Probable toxic component of a putative type VII toxin-antitoxin (TA) system, probably an RNase. Probably neutralized by cognate antitoxin MJ1547. Neutralization may be due to AMPylation by antitoxin MJ1547.</text>
</comment>
<comment type="subunit">
    <text evidence="2">Homodimer, probably forms a complex with cognate antitoxin MJ1547.</text>
</comment>
<comment type="PTM">
    <text evidence="1">Modified by cognate antitoxin MJ1547; probably at least 2 successive AMPylation events occur on Tyr-72.</text>
</comment>
<comment type="similarity">
    <text evidence="3">Belongs to the HepT RNase toxin family.</text>
</comment>
<comment type="sequence caution" evidence="3">
    <conflict type="frameshift">
        <sequence resource="EMBL-CDS" id="AAB99566"/>
    </conflict>
</comment>
<organism>
    <name type="scientific">Methanocaldococcus jannaschii (strain ATCC 43067 / DSM 2661 / JAL-1 / JCM 10045 / NBRC 100440)</name>
    <name type="common">Methanococcus jannaschii</name>
    <dbReference type="NCBI Taxonomy" id="243232"/>
    <lineage>
        <taxon>Archaea</taxon>
        <taxon>Methanobacteriati</taxon>
        <taxon>Methanobacteriota</taxon>
        <taxon>Methanomada group</taxon>
        <taxon>Methanococci</taxon>
        <taxon>Methanococcales</taxon>
        <taxon>Methanocaldococcaceae</taxon>
        <taxon>Methanocaldococcus</taxon>
    </lineage>
</organism>
<dbReference type="EC" id="3.1.-.-" evidence="2"/>
<dbReference type="EMBL" id="L77117">
    <property type="protein sequence ID" value="AAB99566.1"/>
    <property type="status" value="ALT_FRAME"/>
    <property type="molecule type" value="Genomic_DNA"/>
</dbReference>
<dbReference type="PIR" id="C64493">
    <property type="entry name" value="C64493"/>
</dbReference>
<dbReference type="SMR" id="Q58943"/>
<dbReference type="STRING" id="243232.MJ_1548"/>
<dbReference type="PaxDb" id="243232-MJ_1548"/>
<dbReference type="EnsemblBacteria" id="AAB99566">
    <property type="protein sequence ID" value="AAB99566"/>
    <property type="gene ID" value="MJ_1548"/>
</dbReference>
<dbReference type="KEGG" id="mja:MJ_1548"/>
<dbReference type="eggNOG" id="arCOG02109">
    <property type="taxonomic scope" value="Archaea"/>
</dbReference>
<dbReference type="HOGENOM" id="CLU_152343_0_0_2"/>
<dbReference type="InParanoid" id="Q58943"/>
<dbReference type="PhylomeDB" id="Q58943"/>
<dbReference type="Proteomes" id="UP000000805">
    <property type="component" value="Chromosome"/>
</dbReference>
<dbReference type="GO" id="GO:0110001">
    <property type="term" value="C:toxin-antitoxin complex"/>
    <property type="evidence" value="ECO:0007669"/>
    <property type="project" value="InterPro"/>
</dbReference>
<dbReference type="GO" id="GO:0000166">
    <property type="term" value="F:nucleotide binding"/>
    <property type="evidence" value="ECO:0007669"/>
    <property type="project" value="UniProtKB-KW"/>
</dbReference>
<dbReference type="GO" id="GO:0004540">
    <property type="term" value="F:RNA nuclease activity"/>
    <property type="evidence" value="ECO:0007669"/>
    <property type="project" value="InterPro"/>
</dbReference>
<dbReference type="Gene3D" id="1.20.120.580">
    <property type="entry name" value="bsu32300-like"/>
    <property type="match status" value="1"/>
</dbReference>
<dbReference type="InterPro" id="IPR008201">
    <property type="entry name" value="HepT-like"/>
</dbReference>
<dbReference type="InterPro" id="IPR037038">
    <property type="entry name" value="HepT-like_sf"/>
</dbReference>
<dbReference type="Pfam" id="PF01934">
    <property type="entry name" value="HepT-like"/>
    <property type="match status" value="1"/>
</dbReference>
<gene>
    <name type="ordered locus">MJ1548</name>
</gene>